<evidence type="ECO:0000255" key="1">
    <source>
        <dbReference type="HAMAP-Rule" id="MF_01010"/>
    </source>
</evidence>
<accession>A1W8J9</accession>
<proteinExistence type="inferred from homology"/>
<comment type="function">
    <text evidence="1">Catalyzes the formation of 5-methyl-uridine at position 1939 (m5U1939) in 23S rRNA.</text>
</comment>
<comment type="catalytic activity">
    <reaction evidence="1">
        <text>uridine(1939) in 23S rRNA + S-adenosyl-L-methionine = 5-methyluridine(1939) in 23S rRNA + S-adenosyl-L-homocysteine + H(+)</text>
        <dbReference type="Rhea" id="RHEA:42908"/>
        <dbReference type="Rhea" id="RHEA-COMP:10278"/>
        <dbReference type="Rhea" id="RHEA-COMP:10279"/>
        <dbReference type="ChEBI" id="CHEBI:15378"/>
        <dbReference type="ChEBI" id="CHEBI:57856"/>
        <dbReference type="ChEBI" id="CHEBI:59789"/>
        <dbReference type="ChEBI" id="CHEBI:65315"/>
        <dbReference type="ChEBI" id="CHEBI:74447"/>
        <dbReference type="EC" id="2.1.1.190"/>
    </reaction>
</comment>
<comment type="similarity">
    <text evidence="1">Belongs to the class I-like SAM-binding methyltransferase superfamily. RNA M5U methyltransferase family. RlmD subfamily.</text>
</comment>
<organism>
    <name type="scientific">Acidovorax sp. (strain JS42)</name>
    <dbReference type="NCBI Taxonomy" id="232721"/>
    <lineage>
        <taxon>Bacteria</taxon>
        <taxon>Pseudomonadati</taxon>
        <taxon>Pseudomonadota</taxon>
        <taxon>Betaproteobacteria</taxon>
        <taxon>Burkholderiales</taxon>
        <taxon>Comamonadaceae</taxon>
        <taxon>Acidovorax</taxon>
    </lineage>
</organism>
<reference key="1">
    <citation type="submission" date="2006-12" db="EMBL/GenBank/DDBJ databases">
        <title>Complete sequence of chromosome 1 of Acidovorax sp. JS42.</title>
        <authorList>
            <person name="Copeland A."/>
            <person name="Lucas S."/>
            <person name="Lapidus A."/>
            <person name="Barry K."/>
            <person name="Detter J.C."/>
            <person name="Glavina del Rio T."/>
            <person name="Dalin E."/>
            <person name="Tice H."/>
            <person name="Pitluck S."/>
            <person name="Chertkov O."/>
            <person name="Brettin T."/>
            <person name="Bruce D."/>
            <person name="Han C."/>
            <person name="Tapia R."/>
            <person name="Gilna P."/>
            <person name="Schmutz J."/>
            <person name="Larimer F."/>
            <person name="Land M."/>
            <person name="Hauser L."/>
            <person name="Kyrpides N."/>
            <person name="Kim E."/>
            <person name="Stahl D."/>
            <person name="Richardson P."/>
        </authorList>
    </citation>
    <scope>NUCLEOTIDE SEQUENCE [LARGE SCALE GENOMIC DNA]</scope>
    <source>
        <strain>JS42</strain>
    </source>
</reference>
<dbReference type="EC" id="2.1.1.190" evidence="1"/>
<dbReference type="EMBL" id="CP000539">
    <property type="protein sequence ID" value="ABM42574.1"/>
    <property type="molecule type" value="Genomic_DNA"/>
</dbReference>
<dbReference type="SMR" id="A1W8J9"/>
<dbReference type="STRING" id="232721.Ajs_2413"/>
<dbReference type="KEGG" id="ajs:Ajs_2413"/>
<dbReference type="eggNOG" id="COG2265">
    <property type="taxonomic scope" value="Bacteria"/>
</dbReference>
<dbReference type="HOGENOM" id="CLU_014689_8_2_4"/>
<dbReference type="Proteomes" id="UP000000645">
    <property type="component" value="Chromosome"/>
</dbReference>
<dbReference type="GO" id="GO:0051539">
    <property type="term" value="F:4 iron, 4 sulfur cluster binding"/>
    <property type="evidence" value="ECO:0007669"/>
    <property type="project" value="UniProtKB-KW"/>
</dbReference>
<dbReference type="GO" id="GO:0005506">
    <property type="term" value="F:iron ion binding"/>
    <property type="evidence" value="ECO:0007669"/>
    <property type="project" value="UniProtKB-UniRule"/>
</dbReference>
<dbReference type="GO" id="GO:0003723">
    <property type="term" value="F:RNA binding"/>
    <property type="evidence" value="ECO:0007669"/>
    <property type="project" value="InterPro"/>
</dbReference>
<dbReference type="GO" id="GO:0070041">
    <property type="term" value="F:rRNA (uridine-C5-)-methyltransferase activity"/>
    <property type="evidence" value="ECO:0007669"/>
    <property type="project" value="UniProtKB-UniRule"/>
</dbReference>
<dbReference type="GO" id="GO:0070475">
    <property type="term" value="P:rRNA base methylation"/>
    <property type="evidence" value="ECO:0007669"/>
    <property type="project" value="TreeGrafter"/>
</dbReference>
<dbReference type="Gene3D" id="2.40.50.1070">
    <property type="match status" value="1"/>
</dbReference>
<dbReference type="Gene3D" id="2.40.50.140">
    <property type="entry name" value="Nucleic acid-binding proteins"/>
    <property type="match status" value="1"/>
</dbReference>
<dbReference type="Gene3D" id="3.40.50.150">
    <property type="entry name" value="Vaccinia Virus protein VP39"/>
    <property type="match status" value="1"/>
</dbReference>
<dbReference type="HAMAP" id="MF_01010">
    <property type="entry name" value="23SrRNA_methyltr_RlmD"/>
    <property type="match status" value="1"/>
</dbReference>
<dbReference type="InterPro" id="IPR001566">
    <property type="entry name" value="23S_rRNA_MeTrfase_RlmD"/>
</dbReference>
<dbReference type="InterPro" id="IPR030391">
    <property type="entry name" value="MeTrfase_TrmA_CS"/>
</dbReference>
<dbReference type="InterPro" id="IPR012340">
    <property type="entry name" value="NA-bd_OB-fold"/>
</dbReference>
<dbReference type="InterPro" id="IPR029063">
    <property type="entry name" value="SAM-dependent_MTases_sf"/>
</dbReference>
<dbReference type="InterPro" id="IPR010280">
    <property type="entry name" value="U5_MeTrfase_fam"/>
</dbReference>
<dbReference type="NCBIfam" id="NF009639">
    <property type="entry name" value="PRK13168.1"/>
    <property type="match status" value="1"/>
</dbReference>
<dbReference type="NCBIfam" id="TIGR00479">
    <property type="entry name" value="rumA"/>
    <property type="match status" value="1"/>
</dbReference>
<dbReference type="PANTHER" id="PTHR11061:SF49">
    <property type="entry name" value="23S RRNA (URACIL(1939)-C(5))-METHYLTRANSFERASE RLMD"/>
    <property type="match status" value="1"/>
</dbReference>
<dbReference type="PANTHER" id="PTHR11061">
    <property type="entry name" value="RNA M5U METHYLTRANSFERASE"/>
    <property type="match status" value="1"/>
</dbReference>
<dbReference type="Pfam" id="PF05958">
    <property type="entry name" value="tRNA_U5-meth_tr"/>
    <property type="match status" value="1"/>
</dbReference>
<dbReference type="SUPFAM" id="SSF50249">
    <property type="entry name" value="Nucleic acid-binding proteins"/>
    <property type="match status" value="1"/>
</dbReference>
<dbReference type="SUPFAM" id="SSF53335">
    <property type="entry name" value="S-adenosyl-L-methionine-dependent methyltransferases"/>
    <property type="match status" value="1"/>
</dbReference>
<dbReference type="PROSITE" id="PS51687">
    <property type="entry name" value="SAM_MT_RNA_M5U"/>
    <property type="match status" value="1"/>
</dbReference>
<dbReference type="PROSITE" id="PS01231">
    <property type="entry name" value="TRMA_2"/>
    <property type="match status" value="1"/>
</dbReference>
<gene>
    <name evidence="1" type="primary">rlmD</name>
    <name type="synonym">rumA</name>
    <name type="ordered locus">Ajs_2413</name>
</gene>
<sequence length="482" mass="53057">MSDPTEFSPPPPTSTDLPPGWLEVTAMDMDAQGVARKPDGKVVFIDGALPTELVSANTHRKKNNWEQASLTEVHRQSSQRVQPGCPHFGLHAGACGGCKMQHLHVAAQVAVKQRVLEDNLWHLGKVKAETILRPIEGPAWGYRYRARLSVRYVPKKDKVLVGFHERKSRYIADMETCKILPPHVDAMLMPLRALIGSMAARDTCPQIELACGDTVTALVLRHLEPLSPEDKDKLRAFAAVHGVQWWLQPKGPETVHLLDEGGEPLAYGLPDFGITMPFKPTDFTQVNPHINRVLVTRALRLLDARKDERVIDWFCGLGNFTLPIATQAREVLGIEGSEALVARSRENYQSNQAQRQDGSALAATSFVARNLFEMTPEMLIADGASDKWLVDPPREGAFALSKALADIHQARIGAEDAPPLPAGHEGWQPPRRIVYVSCNPATLARDAGLLVHQAGYRCVAAGVVNMFPHTAHVESMAVFERG</sequence>
<name>RLMD_ACISJ</name>
<protein>
    <recommendedName>
        <fullName evidence="1">23S rRNA (uracil(1939)-C(5))-methyltransferase RlmD</fullName>
        <ecNumber evidence="1">2.1.1.190</ecNumber>
    </recommendedName>
    <alternativeName>
        <fullName evidence="1">23S rRNA(m5U1939)-methyltransferase</fullName>
    </alternativeName>
</protein>
<keyword id="KW-0004">4Fe-4S</keyword>
<keyword id="KW-0408">Iron</keyword>
<keyword id="KW-0411">Iron-sulfur</keyword>
<keyword id="KW-0479">Metal-binding</keyword>
<keyword id="KW-0489">Methyltransferase</keyword>
<keyword id="KW-0698">rRNA processing</keyword>
<keyword id="KW-0949">S-adenosyl-L-methionine</keyword>
<keyword id="KW-0808">Transferase</keyword>
<feature type="chain" id="PRO_0000282025" description="23S rRNA (uracil(1939)-C(5))-methyltransferase RlmD">
    <location>
        <begin position="1"/>
        <end position="482"/>
    </location>
</feature>
<feature type="active site" description="Nucleophile" evidence="1">
    <location>
        <position position="438"/>
    </location>
</feature>
<feature type="binding site" evidence="1">
    <location>
        <position position="85"/>
    </location>
    <ligand>
        <name>[4Fe-4S] cluster</name>
        <dbReference type="ChEBI" id="CHEBI:49883"/>
    </ligand>
</feature>
<feature type="binding site" evidence="1">
    <location>
        <position position="95"/>
    </location>
    <ligand>
        <name>[4Fe-4S] cluster</name>
        <dbReference type="ChEBI" id="CHEBI:49883"/>
    </ligand>
</feature>
<feature type="binding site" evidence="1">
    <location>
        <position position="98"/>
    </location>
    <ligand>
        <name>[4Fe-4S] cluster</name>
        <dbReference type="ChEBI" id="CHEBI:49883"/>
    </ligand>
</feature>
<feature type="binding site" evidence="1">
    <location>
        <position position="177"/>
    </location>
    <ligand>
        <name>[4Fe-4S] cluster</name>
        <dbReference type="ChEBI" id="CHEBI:49883"/>
    </ligand>
</feature>
<feature type="binding site" evidence="1">
    <location>
        <position position="285"/>
    </location>
    <ligand>
        <name>S-adenosyl-L-methionine</name>
        <dbReference type="ChEBI" id="CHEBI:59789"/>
    </ligand>
</feature>
<feature type="binding site" evidence="1">
    <location>
        <position position="314"/>
    </location>
    <ligand>
        <name>S-adenosyl-L-methionine</name>
        <dbReference type="ChEBI" id="CHEBI:59789"/>
    </ligand>
</feature>
<feature type="binding site" evidence="1">
    <location>
        <position position="319"/>
    </location>
    <ligand>
        <name>S-adenosyl-L-methionine</name>
        <dbReference type="ChEBI" id="CHEBI:59789"/>
    </ligand>
</feature>
<feature type="binding site" evidence="1">
    <location>
        <position position="335"/>
    </location>
    <ligand>
        <name>S-adenosyl-L-methionine</name>
        <dbReference type="ChEBI" id="CHEBI:59789"/>
    </ligand>
</feature>
<feature type="binding site" evidence="1">
    <location>
        <position position="370"/>
    </location>
    <ligand>
        <name>S-adenosyl-L-methionine</name>
        <dbReference type="ChEBI" id="CHEBI:59789"/>
    </ligand>
</feature>
<feature type="binding site" evidence="1">
    <location>
        <position position="391"/>
    </location>
    <ligand>
        <name>S-adenosyl-L-methionine</name>
        <dbReference type="ChEBI" id="CHEBI:59789"/>
    </ligand>
</feature>